<keyword id="KW-0378">Hydrolase</keyword>
<keyword id="KW-0479">Metal-binding</keyword>
<keyword id="KW-1185">Reference proteome</keyword>
<keyword id="KW-0862">Zinc</keyword>
<evidence type="ECO:0000255" key="1">
    <source>
        <dbReference type="HAMAP-Rule" id="MF_01558"/>
    </source>
</evidence>
<evidence type="ECO:0000255" key="2">
    <source>
        <dbReference type="PROSITE-ProRule" id="PRU01083"/>
    </source>
</evidence>
<gene>
    <name evidence="1" type="primary">cdd</name>
    <name type="ordered locus">Sbal_1694</name>
</gene>
<protein>
    <recommendedName>
        <fullName evidence="1">Cytidine deaminase</fullName>
        <ecNumber evidence="1">3.5.4.5</ecNumber>
    </recommendedName>
    <alternativeName>
        <fullName evidence="1">Cytidine aminohydrolase</fullName>
        <shortName evidence="1">CDA</shortName>
    </alternativeName>
</protein>
<sequence>MQDRFIRSITQLPTPLADALIPMLHQNFAGHLDAQQLATLTSASKMTEAEVLLALLPIAAALAKPPISEFYVGAIAKGKSGDIYMGANLELPGEALFHSVHAEQSAISHAWLSGESQIVDIIVNASPCGHCRQFMNELVEGSKISIHLPAQESHPLAYYLPYAFGPKDLNVTSPLMAKQQTEFALDSADPMIIEGLDHAGLSYAPYTQSFAAVVLETRDGATYCGRYAENAAFNPSMLPMQMALSNLVRHNREFSDISRAVLIESSQGKISLVGATMDALHTVAAIELEHIVIDPV</sequence>
<feature type="chain" id="PRO_1000068960" description="Cytidine deaminase">
    <location>
        <begin position="1"/>
        <end position="296"/>
    </location>
</feature>
<feature type="domain" description="CMP/dCMP-type deaminase 1" evidence="2">
    <location>
        <begin position="47"/>
        <end position="167"/>
    </location>
</feature>
<feature type="domain" description="CMP/dCMP-type deaminase 2" evidence="2">
    <location>
        <begin position="186"/>
        <end position="296"/>
    </location>
</feature>
<feature type="active site" description="Proton donor" evidence="1">
    <location>
        <position position="103"/>
    </location>
</feature>
<feature type="binding site" evidence="1">
    <location>
        <begin position="88"/>
        <end position="90"/>
    </location>
    <ligand>
        <name>substrate</name>
    </ligand>
</feature>
<feature type="binding site" evidence="1">
    <location>
        <position position="101"/>
    </location>
    <ligand>
        <name>Zn(2+)</name>
        <dbReference type="ChEBI" id="CHEBI:29105"/>
        <note>catalytic</note>
    </ligand>
</feature>
<feature type="binding site" evidence="1">
    <location>
        <position position="128"/>
    </location>
    <ligand>
        <name>Zn(2+)</name>
        <dbReference type="ChEBI" id="CHEBI:29105"/>
        <note>catalytic</note>
    </ligand>
</feature>
<feature type="binding site" evidence="1">
    <location>
        <position position="131"/>
    </location>
    <ligand>
        <name>Zn(2+)</name>
        <dbReference type="ChEBI" id="CHEBI:29105"/>
        <note>catalytic</note>
    </ligand>
</feature>
<organism>
    <name type="scientific">Shewanella baltica (strain OS155 / ATCC BAA-1091)</name>
    <dbReference type="NCBI Taxonomy" id="325240"/>
    <lineage>
        <taxon>Bacteria</taxon>
        <taxon>Pseudomonadati</taxon>
        <taxon>Pseudomonadota</taxon>
        <taxon>Gammaproteobacteria</taxon>
        <taxon>Alteromonadales</taxon>
        <taxon>Shewanellaceae</taxon>
        <taxon>Shewanella</taxon>
    </lineage>
</organism>
<dbReference type="EC" id="3.5.4.5" evidence="1"/>
<dbReference type="EMBL" id="CP000563">
    <property type="protein sequence ID" value="ABN61205.1"/>
    <property type="molecule type" value="Genomic_DNA"/>
</dbReference>
<dbReference type="RefSeq" id="WP_006087443.1">
    <property type="nucleotide sequence ID" value="NC_009052.1"/>
</dbReference>
<dbReference type="SMR" id="A3D392"/>
<dbReference type="STRING" id="325240.Sbal_1694"/>
<dbReference type="GeneID" id="11771940"/>
<dbReference type="KEGG" id="sbl:Sbal_1694"/>
<dbReference type="HOGENOM" id="CLU_052424_0_0_6"/>
<dbReference type="OrthoDB" id="9795347at2"/>
<dbReference type="Proteomes" id="UP000001557">
    <property type="component" value="Chromosome"/>
</dbReference>
<dbReference type="GO" id="GO:0005829">
    <property type="term" value="C:cytosol"/>
    <property type="evidence" value="ECO:0007669"/>
    <property type="project" value="TreeGrafter"/>
</dbReference>
<dbReference type="GO" id="GO:0004126">
    <property type="term" value="F:cytidine deaminase activity"/>
    <property type="evidence" value="ECO:0007669"/>
    <property type="project" value="UniProtKB-UniRule"/>
</dbReference>
<dbReference type="GO" id="GO:0042802">
    <property type="term" value="F:identical protein binding"/>
    <property type="evidence" value="ECO:0007669"/>
    <property type="project" value="UniProtKB-ARBA"/>
</dbReference>
<dbReference type="GO" id="GO:0008270">
    <property type="term" value="F:zinc ion binding"/>
    <property type="evidence" value="ECO:0007669"/>
    <property type="project" value="UniProtKB-UniRule"/>
</dbReference>
<dbReference type="GO" id="GO:0009972">
    <property type="term" value="P:cytidine deamination"/>
    <property type="evidence" value="ECO:0007669"/>
    <property type="project" value="InterPro"/>
</dbReference>
<dbReference type="CDD" id="cd01283">
    <property type="entry name" value="cytidine_deaminase"/>
    <property type="match status" value="1"/>
</dbReference>
<dbReference type="FunFam" id="3.40.140.10:FF:000007">
    <property type="entry name" value="Cytidine deaminase"/>
    <property type="match status" value="1"/>
</dbReference>
<dbReference type="Gene3D" id="3.40.140.10">
    <property type="entry name" value="Cytidine Deaminase, domain 2"/>
    <property type="match status" value="2"/>
</dbReference>
<dbReference type="HAMAP" id="MF_01558">
    <property type="entry name" value="Cyt_deam"/>
    <property type="match status" value="1"/>
</dbReference>
<dbReference type="InterPro" id="IPR016192">
    <property type="entry name" value="APOBEC/CMP_deaminase_Zn-bd"/>
</dbReference>
<dbReference type="InterPro" id="IPR002125">
    <property type="entry name" value="CMP_dCMP_dom"/>
</dbReference>
<dbReference type="InterPro" id="IPR013171">
    <property type="entry name" value="Cyd/dCyd_deaminase_Zn-bd"/>
</dbReference>
<dbReference type="InterPro" id="IPR050202">
    <property type="entry name" value="Cyt/Deoxycyt_deaminase"/>
</dbReference>
<dbReference type="InterPro" id="IPR016193">
    <property type="entry name" value="Cytidine_deaminase-like"/>
</dbReference>
<dbReference type="InterPro" id="IPR020797">
    <property type="entry name" value="Cytidine_deaminase_bacteria"/>
</dbReference>
<dbReference type="NCBIfam" id="NF006537">
    <property type="entry name" value="PRK09027.1"/>
    <property type="match status" value="1"/>
</dbReference>
<dbReference type="PANTHER" id="PTHR11644">
    <property type="entry name" value="CYTIDINE DEAMINASE"/>
    <property type="match status" value="1"/>
</dbReference>
<dbReference type="PANTHER" id="PTHR11644:SF2">
    <property type="entry name" value="CYTIDINE DEAMINASE"/>
    <property type="match status" value="1"/>
</dbReference>
<dbReference type="Pfam" id="PF00383">
    <property type="entry name" value="dCMP_cyt_deam_1"/>
    <property type="match status" value="1"/>
</dbReference>
<dbReference type="Pfam" id="PF08211">
    <property type="entry name" value="dCMP_cyt_deam_2"/>
    <property type="match status" value="1"/>
</dbReference>
<dbReference type="PIRSF" id="PIRSF006334">
    <property type="entry name" value="Cdd_plus_pseudo"/>
    <property type="match status" value="1"/>
</dbReference>
<dbReference type="SUPFAM" id="SSF53927">
    <property type="entry name" value="Cytidine deaminase-like"/>
    <property type="match status" value="2"/>
</dbReference>
<dbReference type="PROSITE" id="PS00903">
    <property type="entry name" value="CYT_DCMP_DEAMINASES_1"/>
    <property type="match status" value="1"/>
</dbReference>
<dbReference type="PROSITE" id="PS51747">
    <property type="entry name" value="CYT_DCMP_DEAMINASES_2"/>
    <property type="match status" value="2"/>
</dbReference>
<proteinExistence type="inferred from homology"/>
<name>CDD_SHEB5</name>
<comment type="function">
    <text evidence="1">This enzyme scavenges exogenous and endogenous cytidine and 2'-deoxycytidine for UMP synthesis.</text>
</comment>
<comment type="catalytic activity">
    <reaction evidence="1">
        <text>cytidine + H2O + H(+) = uridine + NH4(+)</text>
        <dbReference type="Rhea" id="RHEA:16069"/>
        <dbReference type="ChEBI" id="CHEBI:15377"/>
        <dbReference type="ChEBI" id="CHEBI:15378"/>
        <dbReference type="ChEBI" id="CHEBI:16704"/>
        <dbReference type="ChEBI" id="CHEBI:17562"/>
        <dbReference type="ChEBI" id="CHEBI:28938"/>
        <dbReference type="EC" id="3.5.4.5"/>
    </reaction>
</comment>
<comment type="catalytic activity">
    <reaction evidence="1">
        <text>2'-deoxycytidine + H2O + H(+) = 2'-deoxyuridine + NH4(+)</text>
        <dbReference type="Rhea" id="RHEA:13433"/>
        <dbReference type="ChEBI" id="CHEBI:15377"/>
        <dbReference type="ChEBI" id="CHEBI:15378"/>
        <dbReference type="ChEBI" id="CHEBI:15698"/>
        <dbReference type="ChEBI" id="CHEBI:16450"/>
        <dbReference type="ChEBI" id="CHEBI:28938"/>
        <dbReference type="EC" id="3.5.4.5"/>
    </reaction>
</comment>
<comment type="cofactor">
    <cofactor evidence="1">
        <name>Zn(2+)</name>
        <dbReference type="ChEBI" id="CHEBI:29105"/>
    </cofactor>
    <text evidence="1">Binds 1 zinc ion.</text>
</comment>
<comment type="subunit">
    <text evidence="1">Homodimer.</text>
</comment>
<comment type="similarity">
    <text evidence="1">Belongs to the cytidine and deoxycytidylate deaminase family.</text>
</comment>
<reference key="1">
    <citation type="submission" date="2007-02" db="EMBL/GenBank/DDBJ databases">
        <title>Complete sequence of chromosome of Shewanella baltica OS155.</title>
        <authorList>
            <consortium name="US DOE Joint Genome Institute"/>
            <person name="Copeland A."/>
            <person name="Lucas S."/>
            <person name="Lapidus A."/>
            <person name="Barry K."/>
            <person name="Detter J.C."/>
            <person name="Glavina del Rio T."/>
            <person name="Hammon N."/>
            <person name="Israni S."/>
            <person name="Dalin E."/>
            <person name="Tice H."/>
            <person name="Pitluck S."/>
            <person name="Sims D.R."/>
            <person name="Brettin T."/>
            <person name="Bruce D."/>
            <person name="Han C."/>
            <person name="Tapia R."/>
            <person name="Brainard J."/>
            <person name="Schmutz J."/>
            <person name="Larimer F."/>
            <person name="Land M."/>
            <person name="Hauser L."/>
            <person name="Kyrpides N."/>
            <person name="Mikhailova N."/>
            <person name="Brettar I."/>
            <person name="Klappenbach J."/>
            <person name="Konstantinidis K."/>
            <person name="Rodrigues J."/>
            <person name="Tiedje J."/>
            <person name="Richardson P."/>
        </authorList>
    </citation>
    <scope>NUCLEOTIDE SEQUENCE [LARGE SCALE GENOMIC DNA]</scope>
    <source>
        <strain>OS155 / ATCC BAA-1091</strain>
    </source>
</reference>
<accession>A3D392</accession>